<evidence type="ECO:0000250" key="1">
    <source>
        <dbReference type="UniProtKB" id="Q9Y5Z7"/>
    </source>
</evidence>
<evidence type="ECO:0000255" key="2"/>
<evidence type="ECO:0000255" key="3">
    <source>
        <dbReference type="PROSITE-ProRule" id="PRU00316"/>
    </source>
</evidence>
<evidence type="ECO:0000256" key="4">
    <source>
        <dbReference type="SAM" id="MobiDB-lite"/>
    </source>
</evidence>
<evidence type="ECO:0000269" key="5">
    <source>
    </source>
</evidence>
<evidence type="ECO:0000305" key="6"/>
<evidence type="ECO:0000312" key="7">
    <source>
        <dbReference type="EMBL" id="EDL21371.1"/>
    </source>
</evidence>
<evidence type="ECO:0000312" key="8">
    <source>
        <dbReference type="Proteomes" id="UP000000589"/>
    </source>
</evidence>
<evidence type="ECO:0007829" key="9">
    <source>
        <dbReference type="PDB" id="1WFT"/>
    </source>
</evidence>
<organism>
    <name type="scientific">Mus musculus</name>
    <name type="common">Mouse</name>
    <dbReference type="NCBI Taxonomy" id="10090"/>
    <lineage>
        <taxon>Eukaryota</taxon>
        <taxon>Metazoa</taxon>
        <taxon>Chordata</taxon>
        <taxon>Craniata</taxon>
        <taxon>Vertebrata</taxon>
        <taxon>Euteleostomi</taxon>
        <taxon>Mammalia</taxon>
        <taxon>Eutheria</taxon>
        <taxon>Euarchontoglires</taxon>
        <taxon>Glires</taxon>
        <taxon>Rodentia</taxon>
        <taxon>Myomorpha</taxon>
        <taxon>Muroidea</taxon>
        <taxon>Muridae</taxon>
        <taxon>Murinae</taxon>
        <taxon>Mus</taxon>
        <taxon>Mus</taxon>
    </lineage>
</organism>
<proteinExistence type="evidence at protein level"/>
<keyword id="KW-0002">3D-structure</keyword>
<keyword id="KW-0963">Cytoplasm</keyword>
<keyword id="KW-0880">Kelch repeat</keyword>
<keyword id="KW-0539">Nucleus</keyword>
<keyword id="KW-1185">Reference proteome</keyword>
<keyword id="KW-0677">Repeat</keyword>
<reference evidence="8" key="1">
    <citation type="journal article" date="2009" name="PLoS Biol.">
        <title>Lineage-specific biology revealed by a finished genome assembly of the mouse.</title>
        <authorList>
            <person name="Church D.M."/>
            <person name="Goodstadt L."/>
            <person name="Hillier L.W."/>
            <person name="Zody M.C."/>
            <person name="Goldstein S."/>
            <person name="She X."/>
            <person name="Bult C.J."/>
            <person name="Agarwala R."/>
            <person name="Cherry J.L."/>
            <person name="DiCuccio M."/>
            <person name="Hlavina W."/>
            <person name="Kapustin Y."/>
            <person name="Meric P."/>
            <person name="Maglott D."/>
            <person name="Birtle Z."/>
            <person name="Marques A.C."/>
            <person name="Graves T."/>
            <person name="Zhou S."/>
            <person name="Teague B."/>
            <person name="Potamousis K."/>
            <person name="Churas C."/>
            <person name="Place M."/>
            <person name="Herschleb J."/>
            <person name="Runnheim R."/>
            <person name="Forrest D."/>
            <person name="Amos-Landgraf J."/>
            <person name="Schwartz D.C."/>
            <person name="Cheng Z."/>
            <person name="Lindblad-Toh K."/>
            <person name="Eichler E.E."/>
            <person name="Ponting C.P."/>
        </authorList>
    </citation>
    <scope>NUCLEOTIDE SEQUENCE [LARGE SCALE GENOMIC DNA]</scope>
    <source>
        <strain evidence="8">C57BL/6J</strain>
    </source>
</reference>
<reference evidence="7" key="2">
    <citation type="submission" date="2005-07" db="EMBL/GenBank/DDBJ databases">
        <authorList>
            <person name="Mural R.J."/>
            <person name="Adams M.D."/>
            <person name="Myers E.W."/>
            <person name="Smith H.O."/>
            <person name="Venter J.C."/>
        </authorList>
    </citation>
    <scope>NUCLEOTIDE SEQUENCE [LARGE SCALE GENOMIC DNA]</scope>
</reference>
<reference key="3">
    <citation type="journal article" date="2005" name="Science">
        <title>The transcriptional landscape of the mammalian genome.</title>
        <authorList>
            <person name="Carninci P."/>
            <person name="Kasukawa T."/>
            <person name="Katayama S."/>
            <person name="Gough J."/>
            <person name="Frith M.C."/>
            <person name="Maeda N."/>
            <person name="Oyama R."/>
            <person name="Ravasi T."/>
            <person name="Lenhard B."/>
            <person name="Wells C."/>
            <person name="Kodzius R."/>
            <person name="Shimokawa K."/>
            <person name="Bajic V.B."/>
            <person name="Brenner S.E."/>
            <person name="Batalov S."/>
            <person name="Forrest A.R."/>
            <person name="Zavolan M."/>
            <person name="Davis M.J."/>
            <person name="Wilming L.G."/>
            <person name="Aidinis V."/>
            <person name="Allen J.E."/>
            <person name="Ambesi-Impiombato A."/>
            <person name="Apweiler R."/>
            <person name="Aturaliya R.N."/>
            <person name="Bailey T.L."/>
            <person name="Bansal M."/>
            <person name="Baxter L."/>
            <person name="Beisel K.W."/>
            <person name="Bersano T."/>
            <person name="Bono H."/>
            <person name="Chalk A.M."/>
            <person name="Chiu K.P."/>
            <person name="Choudhary V."/>
            <person name="Christoffels A."/>
            <person name="Clutterbuck D.R."/>
            <person name="Crowe M.L."/>
            <person name="Dalla E."/>
            <person name="Dalrymple B.P."/>
            <person name="de Bono B."/>
            <person name="Della Gatta G."/>
            <person name="di Bernardo D."/>
            <person name="Down T."/>
            <person name="Engstrom P."/>
            <person name="Fagiolini M."/>
            <person name="Faulkner G."/>
            <person name="Fletcher C.F."/>
            <person name="Fukushima T."/>
            <person name="Furuno M."/>
            <person name="Futaki S."/>
            <person name="Gariboldi M."/>
            <person name="Georgii-Hemming P."/>
            <person name="Gingeras T.R."/>
            <person name="Gojobori T."/>
            <person name="Green R.E."/>
            <person name="Gustincich S."/>
            <person name="Harbers M."/>
            <person name="Hayashi Y."/>
            <person name="Hensch T.K."/>
            <person name="Hirokawa N."/>
            <person name="Hill D."/>
            <person name="Huminiecki L."/>
            <person name="Iacono M."/>
            <person name="Ikeo K."/>
            <person name="Iwama A."/>
            <person name="Ishikawa T."/>
            <person name="Jakt M."/>
            <person name="Kanapin A."/>
            <person name="Katoh M."/>
            <person name="Kawasawa Y."/>
            <person name="Kelso J."/>
            <person name="Kitamura H."/>
            <person name="Kitano H."/>
            <person name="Kollias G."/>
            <person name="Krishnan S.P."/>
            <person name="Kruger A."/>
            <person name="Kummerfeld S.K."/>
            <person name="Kurochkin I.V."/>
            <person name="Lareau L.F."/>
            <person name="Lazarevic D."/>
            <person name="Lipovich L."/>
            <person name="Liu J."/>
            <person name="Liuni S."/>
            <person name="McWilliam S."/>
            <person name="Madan Babu M."/>
            <person name="Madera M."/>
            <person name="Marchionni L."/>
            <person name="Matsuda H."/>
            <person name="Matsuzawa S."/>
            <person name="Miki H."/>
            <person name="Mignone F."/>
            <person name="Miyake S."/>
            <person name="Morris K."/>
            <person name="Mottagui-Tabar S."/>
            <person name="Mulder N."/>
            <person name="Nakano N."/>
            <person name="Nakauchi H."/>
            <person name="Ng P."/>
            <person name="Nilsson R."/>
            <person name="Nishiguchi S."/>
            <person name="Nishikawa S."/>
            <person name="Nori F."/>
            <person name="Ohara O."/>
            <person name="Okazaki Y."/>
            <person name="Orlando V."/>
            <person name="Pang K.C."/>
            <person name="Pavan W.J."/>
            <person name="Pavesi G."/>
            <person name="Pesole G."/>
            <person name="Petrovsky N."/>
            <person name="Piazza S."/>
            <person name="Reed J."/>
            <person name="Reid J.F."/>
            <person name="Ring B.Z."/>
            <person name="Ringwald M."/>
            <person name="Rost B."/>
            <person name="Ruan Y."/>
            <person name="Salzberg S.L."/>
            <person name="Sandelin A."/>
            <person name="Schneider C."/>
            <person name="Schoenbach C."/>
            <person name="Sekiguchi K."/>
            <person name="Semple C.A."/>
            <person name="Seno S."/>
            <person name="Sessa L."/>
            <person name="Sheng Y."/>
            <person name="Shibata Y."/>
            <person name="Shimada H."/>
            <person name="Shimada K."/>
            <person name="Silva D."/>
            <person name="Sinclair B."/>
            <person name="Sperling S."/>
            <person name="Stupka E."/>
            <person name="Sugiura K."/>
            <person name="Sultana R."/>
            <person name="Takenaka Y."/>
            <person name="Taki K."/>
            <person name="Tammoja K."/>
            <person name="Tan S.L."/>
            <person name="Tang S."/>
            <person name="Taylor M.S."/>
            <person name="Tegner J."/>
            <person name="Teichmann S.A."/>
            <person name="Ueda H.R."/>
            <person name="van Nimwegen E."/>
            <person name="Verardo R."/>
            <person name="Wei C.L."/>
            <person name="Yagi K."/>
            <person name="Yamanishi H."/>
            <person name="Zabarovsky E."/>
            <person name="Zhu S."/>
            <person name="Zimmer A."/>
            <person name="Hide W."/>
            <person name="Bult C."/>
            <person name="Grimmond S.M."/>
            <person name="Teasdale R.D."/>
            <person name="Liu E.T."/>
            <person name="Brusic V."/>
            <person name="Quackenbush J."/>
            <person name="Wahlestedt C."/>
            <person name="Mattick J.S."/>
            <person name="Hume D.A."/>
            <person name="Kai C."/>
            <person name="Sasaki D."/>
            <person name="Tomaru Y."/>
            <person name="Fukuda S."/>
            <person name="Kanamori-Katayama M."/>
            <person name="Suzuki M."/>
            <person name="Aoki J."/>
            <person name="Arakawa T."/>
            <person name="Iida J."/>
            <person name="Imamura K."/>
            <person name="Itoh M."/>
            <person name="Kato T."/>
            <person name="Kawaji H."/>
            <person name="Kawagashira N."/>
            <person name="Kawashima T."/>
            <person name="Kojima M."/>
            <person name="Kondo S."/>
            <person name="Konno H."/>
            <person name="Nakano K."/>
            <person name="Ninomiya N."/>
            <person name="Nishio T."/>
            <person name="Okada M."/>
            <person name="Plessy C."/>
            <person name="Shibata K."/>
            <person name="Shiraki T."/>
            <person name="Suzuki S."/>
            <person name="Tagami M."/>
            <person name="Waki K."/>
            <person name="Watahiki A."/>
            <person name="Okamura-Oho Y."/>
            <person name="Suzuki H."/>
            <person name="Kawai J."/>
            <person name="Hayashizaki Y."/>
        </authorList>
    </citation>
    <scope>NUCLEOTIDE SEQUENCE [LARGE SCALE MRNA] OF 461-722</scope>
    <source>
        <strain>C57BL/6J</strain>
        <tissue>Testis</tissue>
    </source>
</reference>
<reference key="4">
    <citation type="journal article" date="2010" name="Cell">
        <title>A tissue-specific atlas of mouse protein phosphorylation and expression.</title>
        <authorList>
            <person name="Huttlin E.L."/>
            <person name="Jedrychowski M.P."/>
            <person name="Elias J.E."/>
            <person name="Goswami T."/>
            <person name="Rad R."/>
            <person name="Beausoleil S.A."/>
            <person name="Villen J."/>
            <person name="Haas W."/>
            <person name="Sowa M.E."/>
            <person name="Gygi S.P."/>
        </authorList>
    </citation>
    <scope>IDENTIFICATION BY MASS SPECTROMETRY [LARGE SCALE ANALYSIS]</scope>
    <source>
        <tissue>Testis</tissue>
    </source>
</reference>
<reference key="5">
    <citation type="journal article" date="2019" name="Exp. Cell Res.">
        <title>Fam208a orchestrates interaction protein network essential for early embryonic development and cell division.</title>
        <authorList>
            <person name="Gresakova V."/>
            <person name="Novosadova V."/>
            <person name="Prochazkova M."/>
            <person name="Bhargava S."/>
            <person name="Jenickova I."/>
            <person name="Prochazka J."/>
            <person name="Sedlacek R."/>
        </authorList>
    </citation>
    <scope>INTERACTION WITH TASOR</scope>
    <scope>TISSUE SPECIFICITY</scope>
</reference>
<reference key="6">
    <citation type="submission" date="2004-11" db="PDB data bank">
        <title>Solution structure of C-terminal fibronectin type III domain of mouse 1700129l13rik protein.</title>
        <authorList>
            <consortium name="RIKEN structural genomics initiative (RSGI)"/>
        </authorList>
    </citation>
    <scope>STRUCTURE BY NMR OF 607-716</scope>
</reference>
<name>HCFC2_MOUSE</name>
<accession>Q9D968</accession>
<accession>G5E837</accession>
<gene>
    <name type="primary">Hcfc2</name>
</gene>
<protein>
    <recommendedName>
        <fullName>Host cell factor 2</fullName>
        <shortName>HCF-2</shortName>
    </recommendedName>
    <alternativeName>
        <fullName>C2 factor</fullName>
    </alternativeName>
</protein>
<comment type="subunit">
    <text evidence="1 5">Binds KMT2A/MLL1. Component of the MLL1/MLL complex, at least composed of KMT2A/MLL1, ASH2L, RBBP5, DPY30, WDR5, MEN1, HCFC1 and HCFC2 (By similarity). Interacts with TASOR (PubMed:31112734).</text>
</comment>
<comment type="subcellular location">
    <subcellularLocation>
        <location evidence="1">Cytoplasm</location>
    </subcellularLocation>
    <subcellularLocation>
        <location evidence="1">Nucleus</location>
    </subcellularLocation>
</comment>
<comment type="tissue specificity">
    <text evidence="5">Expressed in the spermatogonia, spermatocytes and ovary.</text>
</comment>
<comment type="sequence caution" evidence="6">
    <conflict type="erroneous initiation">
        <sequence resource="EMBL-CDS" id="BAB24953"/>
    </conflict>
    <text>Truncated N-terminus.</text>
</comment>
<dbReference type="EMBL" id="AC152980">
    <property type="status" value="NOT_ANNOTATED_CDS"/>
    <property type="molecule type" value="Genomic_DNA"/>
</dbReference>
<dbReference type="EMBL" id="AC155709">
    <property type="status" value="NOT_ANNOTATED_CDS"/>
    <property type="molecule type" value="Genomic_DNA"/>
</dbReference>
<dbReference type="EMBL" id="CH466539">
    <property type="protein sequence ID" value="EDL21371.1"/>
    <property type="molecule type" value="Genomic_DNA"/>
</dbReference>
<dbReference type="EMBL" id="AK007317">
    <property type="protein sequence ID" value="BAB24953.1"/>
    <property type="status" value="ALT_INIT"/>
    <property type="molecule type" value="mRNA"/>
</dbReference>
<dbReference type="CCDS" id="CCDS36014.1"/>
<dbReference type="RefSeq" id="NP_001074687.1">
    <property type="nucleotide sequence ID" value="NM_001081218.1"/>
</dbReference>
<dbReference type="PDB" id="1WFT">
    <property type="method" value="NMR"/>
    <property type="chains" value="A=607-716"/>
</dbReference>
<dbReference type="PDBsum" id="1WFT"/>
<dbReference type="BMRB" id="Q9D968"/>
<dbReference type="SMR" id="Q9D968"/>
<dbReference type="FunCoup" id="Q9D968">
    <property type="interactions" value="3639"/>
</dbReference>
<dbReference type="STRING" id="10090.ENSMUSP00000020478"/>
<dbReference type="GlyGen" id="Q9D968">
    <property type="glycosylation" value="2 sites, 1 N-linked glycan (1 site), 1 O-linked glycan (1 site)"/>
</dbReference>
<dbReference type="iPTMnet" id="Q9D968"/>
<dbReference type="PhosphoSitePlus" id="Q9D968"/>
<dbReference type="PaxDb" id="10090-ENSMUSP00000020478"/>
<dbReference type="PeptideAtlas" id="Q9D968"/>
<dbReference type="ProteomicsDB" id="269768"/>
<dbReference type="ProteomicsDB" id="330546"/>
<dbReference type="Pumba" id="Q9D968"/>
<dbReference type="Antibodypedia" id="1771">
    <property type="antibodies" value="166 antibodies from 21 providers"/>
</dbReference>
<dbReference type="DNASU" id="67933"/>
<dbReference type="Ensembl" id="ENSMUST00000020478.14">
    <property type="protein sequence ID" value="ENSMUSP00000020478.8"/>
    <property type="gene ID" value="ENSMUSG00000020246.14"/>
</dbReference>
<dbReference type="GeneID" id="67933"/>
<dbReference type="KEGG" id="mmu:67933"/>
<dbReference type="UCSC" id="uc007gjt.1">
    <property type="organism name" value="mouse"/>
</dbReference>
<dbReference type="AGR" id="MGI:1915183"/>
<dbReference type="CTD" id="29915"/>
<dbReference type="MGI" id="MGI:1915183">
    <property type="gene designation" value="Hcfc2"/>
</dbReference>
<dbReference type="VEuPathDB" id="HostDB:ENSMUSG00000020246"/>
<dbReference type="eggNOG" id="KOG4152">
    <property type="taxonomic scope" value="Eukaryota"/>
</dbReference>
<dbReference type="GeneTree" id="ENSGT00940000160733"/>
<dbReference type="HOGENOM" id="CLU_002603_1_0_1"/>
<dbReference type="InParanoid" id="Q9D968"/>
<dbReference type="OMA" id="VFKTLYC"/>
<dbReference type="TreeFam" id="TF314757"/>
<dbReference type="Reactome" id="R-MMU-9772755">
    <property type="pathway name" value="Formation of WDR5-containing histone-modifying complexes"/>
</dbReference>
<dbReference type="BioGRID-ORCS" id="67933">
    <property type="hits" value="11 hits in 81 CRISPR screens"/>
</dbReference>
<dbReference type="ChiTaRS" id="Hcfc2">
    <property type="organism name" value="mouse"/>
</dbReference>
<dbReference type="EvolutionaryTrace" id="Q9D968"/>
<dbReference type="PRO" id="PR:Q9D968"/>
<dbReference type="Proteomes" id="UP000000589">
    <property type="component" value="Chromosome 10"/>
</dbReference>
<dbReference type="RNAct" id="Q9D968">
    <property type="molecule type" value="protein"/>
</dbReference>
<dbReference type="Bgee" id="ENSMUSG00000020246">
    <property type="expression patterns" value="Expressed in seminiferous tubule of testis and 237 other cell types or tissues"/>
</dbReference>
<dbReference type="ExpressionAtlas" id="Q9D968">
    <property type="expression patterns" value="baseline and differential"/>
</dbReference>
<dbReference type="GO" id="GO:0005829">
    <property type="term" value="C:cytosol"/>
    <property type="evidence" value="ECO:0007669"/>
    <property type="project" value="Ensembl"/>
</dbReference>
<dbReference type="GO" id="GO:0071339">
    <property type="term" value="C:MLL1 complex"/>
    <property type="evidence" value="ECO:0007669"/>
    <property type="project" value="Ensembl"/>
</dbReference>
<dbReference type="GO" id="GO:0005886">
    <property type="term" value="C:plasma membrane"/>
    <property type="evidence" value="ECO:0007669"/>
    <property type="project" value="Ensembl"/>
</dbReference>
<dbReference type="GO" id="GO:0048188">
    <property type="term" value="C:Set1C/COMPASS complex"/>
    <property type="evidence" value="ECO:0007669"/>
    <property type="project" value="Ensembl"/>
</dbReference>
<dbReference type="GO" id="GO:0003712">
    <property type="term" value="F:transcription coregulator activity"/>
    <property type="evidence" value="ECO:0000315"/>
    <property type="project" value="MGI"/>
</dbReference>
<dbReference type="GO" id="GO:0140374">
    <property type="term" value="P:antiviral innate immune response"/>
    <property type="evidence" value="ECO:0000315"/>
    <property type="project" value="MGI"/>
</dbReference>
<dbReference type="GO" id="GO:1902615">
    <property type="term" value="P:immune response involved in response to exogenous dsRNA"/>
    <property type="evidence" value="ECO:0000315"/>
    <property type="project" value="MGI"/>
</dbReference>
<dbReference type="GO" id="GO:0000122">
    <property type="term" value="P:negative regulation of transcription by RNA polymerase II"/>
    <property type="evidence" value="ECO:0000250"/>
    <property type="project" value="UniProtKB"/>
</dbReference>
<dbReference type="GO" id="GO:0034139">
    <property type="term" value="P:regulation of toll-like receptor 3 signaling pathway"/>
    <property type="evidence" value="ECO:0000315"/>
    <property type="project" value="MGI"/>
</dbReference>
<dbReference type="GO" id="GO:0006357">
    <property type="term" value="P:regulation of transcription by RNA polymerase II"/>
    <property type="evidence" value="ECO:0000315"/>
    <property type="project" value="MGI"/>
</dbReference>
<dbReference type="CDD" id="cd00063">
    <property type="entry name" value="FN3"/>
    <property type="match status" value="2"/>
</dbReference>
<dbReference type="FunFam" id="2.60.40.10:FF:000443">
    <property type="entry name" value="host cell factor 1"/>
    <property type="match status" value="1"/>
</dbReference>
<dbReference type="FunFam" id="2.60.40.10:FF:000259">
    <property type="entry name" value="Host cell factor 1 (Predicted)"/>
    <property type="match status" value="1"/>
</dbReference>
<dbReference type="FunFam" id="2.120.10.80:FF:000085">
    <property type="entry name" value="host cell factor 1 isoform X4"/>
    <property type="match status" value="1"/>
</dbReference>
<dbReference type="Gene3D" id="6.10.250.2590">
    <property type="match status" value="1"/>
</dbReference>
<dbReference type="Gene3D" id="2.60.40.10">
    <property type="entry name" value="Immunoglobulins"/>
    <property type="match status" value="2"/>
</dbReference>
<dbReference type="Gene3D" id="2.120.10.80">
    <property type="entry name" value="Kelch-type beta propeller"/>
    <property type="match status" value="2"/>
</dbReference>
<dbReference type="InterPro" id="IPR003961">
    <property type="entry name" value="FN3_dom"/>
</dbReference>
<dbReference type="InterPro" id="IPR036116">
    <property type="entry name" value="FN3_sf"/>
</dbReference>
<dbReference type="InterPro" id="IPR043536">
    <property type="entry name" value="HCF1/2"/>
</dbReference>
<dbReference type="InterPro" id="IPR013783">
    <property type="entry name" value="Ig-like_fold"/>
</dbReference>
<dbReference type="InterPro" id="IPR015915">
    <property type="entry name" value="Kelch-typ_b-propeller"/>
</dbReference>
<dbReference type="PANTHER" id="PTHR46003">
    <property type="entry name" value="HOST CELL FACTOR"/>
    <property type="match status" value="1"/>
</dbReference>
<dbReference type="PANTHER" id="PTHR46003:SF2">
    <property type="entry name" value="HOST CELL FACTOR 2"/>
    <property type="match status" value="1"/>
</dbReference>
<dbReference type="Pfam" id="PF13854">
    <property type="entry name" value="Kelch_HCF"/>
    <property type="match status" value="1"/>
</dbReference>
<dbReference type="SMART" id="SM00060">
    <property type="entry name" value="FN3"/>
    <property type="match status" value="2"/>
</dbReference>
<dbReference type="SUPFAM" id="SSF49265">
    <property type="entry name" value="Fibronectin type III"/>
    <property type="match status" value="1"/>
</dbReference>
<dbReference type="SUPFAM" id="SSF117281">
    <property type="entry name" value="Kelch motif"/>
    <property type="match status" value="1"/>
</dbReference>
<dbReference type="PROSITE" id="PS50853">
    <property type="entry name" value="FN3"/>
    <property type="match status" value="3"/>
</dbReference>
<sequence length="722" mass="79435">MAAPSLLNWRRVSSFTGPVPRARHGHRAVAIRELMIIFGGGNEGIADELHVYNTVTNQWFLPAVRGDIPPGCAAHGFVCDGTRILVFGGMVEYGRYSNELYELQASRWLWKKVKPQPPPSGFPPCPRLGHSFSLYGNKCYLFGGLANESEDSNNNVPRYLNDFYELELQHGSGVVGWSIPATKGVVPSPRESHTAIIYCKKDSASPKMYVFGGMCGARLDDLWQLDLETMSWSKPETKGTVPLPRSLHTASVIGNKMYIFGGWVPHKGENPETSPHDCEWRCTSSFSYLNLDTAEWTTLVSDSQEDKKNSRPRPRAGHCAVAIGTRLYFWSGRDGYKKALNSQVCCKDLWYLDTEKPPAPSQVQLIKATTNSFHVKWDEVPTVEGYLLQLNTDLTYQATSSDSSAAPSVLGGRMDPHRQGSNSTLHNSVSDTVNSTKTEHTAVRGTSLRSKPDSRAVDSSAALHSPLAPNTSNNSSWVTDMLRKNEVDEICALPATKISRVEVHAAATPFSKETPSNPVAILKAEQWCDVGIFKNNTALVSQFYLLPKGKQSMSKVGNADVPDYSLLKKQDLVPGTVYKFRVAAINGCGIGPLSKVSEFKTCTPGFPGAPSTVRISKNVDGIHLSWEPPTSPSGNILEYSAYLAIRTAQMQDNPSQLVFMRIYCGLKTSCTVTAGQLANAHIDYTSRPAIVFRISAKNEKGYGPATQVRWLQDQEKDVGPWF</sequence>
<feature type="chain" id="PRO_0000119073" description="Host cell factor 2">
    <location>
        <begin position="1"/>
        <end position="722"/>
    </location>
</feature>
<feature type="repeat" description="Kelch 1" evidence="2">
    <location>
        <begin position="34"/>
        <end position="79"/>
    </location>
</feature>
<feature type="repeat" description="Kelch 2" evidence="2">
    <location>
        <begin position="83"/>
        <end position="130"/>
    </location>
</feature>
<feature type="repeat" description="Kelch 3" evidence="2">
    <location>
        <begin position="207"/>
        <end position="255"/>
    </location>
</feature>
<feature type="repeat" description="Kelch 4" evidence="2">
    <location>
        <begin position="257"/>
        <end position="303"/>
    </location>
</feature>
<feature type="domain" description="Fibronectin type-III 1" evidence="3">
    <location>
        <begin position="359"/>
        <end position="460"/>
    </location>
</feature>
<feature type="domain" description="Fibronectin type-III 2" evidence="3">
    <location>
        <begin position="514"/>
        <end position="604"/>
    </location>
</feature>
<feature type="domain" description="Fibronectin type-III 3" evidence="3">
    <location>
        <begin position="606"/>
        <end position="716"/>
    </location>
</feature>
<feature type="region of interest" description="Disordered" evidence="4">
    <location>
        <begin position="398"/>
        <end position="476"/>
    </location>
</feature>
<feature type="compositionally biased region" description="Polar residues" evidence="4">
    <location>
        <begin position="419"/>
        <end position="436"/>
    </location>
</feature>
<feature type="sequence conflict" description="In Ref. 3; BAB24953." evidence="6" ref="3">
    <original>VRWLQDQEKDVGPWF</original>
    <variation>IRWLQGNSKKAPLS</variation>
    <location>
        <begin position="708"/>
        <end position="722"/>
    </location>
</feature>
<feature type="strand" evidence="9">
    <location>
        <begin position="611"/>
        <end position="617"/>
    </location>
</feature>
<feature type="strand" evidence="9">
    <location>
        <begin position="619"/>
        <end position="627"/>
    </location>
</feature>
<feature type="strand" evidence="9">
    <location>
        <begin position="639"/>
        <end position="645"/>
    </location>
</feature>
<feature type="strand" evidence="9">
    <location>
        <begin position="658"/>
        <end position="666"/>
    </location>
</feature>
<feature type="strand" evidence="9">
    <location>
        <begin position="668"/>
        <end position="673"/>
    </location>
</feature>
<feature type="helix" evidence="9">
    <location>
        <begin position="674"/>
        <end position="677"/>
    </location>
</feature>
<feature type="strand" evidence="9">
    <location>
        <begin position="685"/>
        <end position="687"/>
    </location>
</feature>
<feature type="strand" evidence="9">
    <location>
        <begin position="689"/>
        <end position="702"/>
    </location>
</feature>
<feature type="strand" evidence="9">
    <location>
        <begin position="706"/>
        <end position="711"/>
    </location>
</feature>